<evidence type="ECO:0000255" key="1"/>
<evidence type="ECO:0000305" key="2"/>
<accession>Q86T23</accession>
<accession>Q8NF65</accession>
<accession>Q96FR5</accession>
<accession>Q9BRE8</accession>
<dbReference type="EMBL" id="AK090414">
    <property type="protein sequence ID" value="BAC03395.1"/>
    <property type="status" value="ALT_INIT"/>
    <property type="molecule type" value="mRNA"/>
</dbReference>
<dbReference type="EMBL" id="AL137798">
    <property type="status" value="NOT_ANNOTATED_CDS"/>
    <property type="molecule type" value="Genomic_DNA"/>
</dbReference>
<dbReference type="EMBL" id="BC047736">
    <property type="status" value="NOT_ANNOTATED_CDS"/>
    <property type="molecule type" value="mRNA"/>
</dbReference>
<dbReference type="SMR" id="Q86T23"/>
<dbReference type="FunCoup" id="Q86T23">
    <property type="interactions" value="26"/>
</dbReference>
<dbReference type="IntAct" id="Q86T23">
    <property type="interactions" value="9"/>
</dbReference>
<dbReference type="GlyGen" id="Q86T23">
    <property type="glycosylation" value="1 site, 1 O-linked glycan (1 site)"/>
</dbReference>
<dbReference type="BioMuta" id="HGNC:28170"/>
<dbReference type="DMDM" id="74727418"/>
<dbReference type="jPOST" id="Q86T23"/>
<dbReference type="MassIVE" id="Q86T23"/>
<dbReference type="ProteomicsDB" id="69659"/>
<dbReference type="AGR" id="HGNC:28170"/>
<dbReference type="GeneCards" id="CROCCP2"/>
<dbReference type="HGNC" id="HGNC:28170">
    <property type="gene designation" value="CROCCP2"/>
</dbReference>
<dbReference type="neXtProt" id="NX_Q86T23"/>
<dbReference type="InParanoid" id="Q86T23"/>
<dbReference type="PAN-GO" id="Q86T23">
    <property type="GO annotations" value="3 GO annotations based on evolutionary models"/>
</dbReference>
<dbReference type="PhylomeDB" id="Q86T23"/>
<dbReference type="PathwayCommons" id="Q86T23"/>
<dbReference type="SignaLink" id="Q86T23"/>
<dbReference type="ChiTaRS" id="CROCCP2">
    <property type="organism name" value="human"/>
</dbReference>
<dbReference type="Pharos" id="Q86T23">
    <property type="development level" value="Tdark"/>
</dbReference>
<dbReference type="PRO" id="PR:Q86T23"/>
<dbReference type="Proteomes" id="UP000005640">
    <property type="component" value="Unplaced"/>
</dbReference>
<dbReference type="RNAct" id="Q86T23">
    <property type="molecule type" value="protein"/>
</dbReference>
<keyword id="KW-0175">Coiled coil</keyword>
<keyword id="KW-1267">Proteomics identification</keyword>
<keyword id="KW-1185">Reference proteome</keyword>
<feature type="chain" id="PRO_0000309212" description="Putative ciliary rootlet coiled-coil protein-like 1 protein">
    <location>
        <begin position="1"/>
        <end position="111"/>
    </location>
</feature>
<feature type="coiled-coil region" evidence="1">
    <location>
        <begin position="21"/>
        <end position="86"/>
    </location>
</feature>
<proteinExistence type="uncertain"/>
<gene>
    <name type="primary">CROCCP2</name>
    <name type="synonym">CROCCL1</name>
</gene>
<sequence length="111" mass="12396">MLQAKKTEVAEALTKAEAGRMELELSVTKLRAEEASLQDSLSKLSALNESLAQDKLDLNCLVTQLEEEKAMLQGRQRQAEQEATVAPAEQEWLEELWLEQEVARQGLEGSL</sequence>
<organism>
    <name type="scientific">Homo sapiens</name>
    <name type="common">Human</name>
    <dbReference type="NCBI Taxonomy" id="9606"/>
    <lineage>
        <taxon>Eukaryota</taxon>
        <taxon>Metazoa</taxon>
        <taxon>Chordata</taxon>
        <taxon>Craniata</taxon>
        <taxon>Vertebrata</taxon>
        <taxon>Euteleostomi</taxon>
        <taxon>Mammalia</taxon>
        <taxon>Eutheria</taxon>
        <taxon>Euarchontoglires</taxon>
        <taxon>Primates</taxon>
        <taxon>Haplorrhini</taxon>
        <taxon>Catarrhini</taxon>
        <taxon>Hominidae</taxon>
        <taxon>Homo</taxon>
    </lineage>
</organism>
<name>CROL1_HUMAN</name>
<protein>
    <recommendedName>
        <fullName>Putative ciliary rootlet coiled-coil protein-like 1 protein</fullName>
    </recommendedName>
    <alternativeName>
        <fullName>Ciliary rootlet coiled-coil protein pseudogene 2</fullName>
    </alternativeName>
</protein>
<comment type="interaction">
    <interactant intactId="EBI-2872397">
        <id>Q86T23</id>
    </interactant>
    <interactant intactId="EBI-744203">
        <id>Q8IY31</id>
        <label>IFT20</label>
    </interactant>
    <organismsDiffer>false</organismsDiffer>
    <experiments>3</experiments>
</comment>
<comment type="similarity">
    <text evidence="2">Belongs to the rootletin family.</text>
</comment>
<comment type="caution">
    <text evidence="2">Could be the product of a pseudogene.</text>
</comment>
<comment type="sequence caution" evidence="2">
    <conflict type="erroneous initiation">
        <sequence resource="EMBL-CDS" id="BAC03395"/>
    </conflict>
    <text>Extended N-terminus.</text>
</comment>
<reference key="1">
    <citation type="journal article" date="2004" name="Nat. Genet.">
        <title>Complete sequencing and characterization of 21,243 full-length human cDNAs.</title>
        <authorList>
            <person name="Ota T."/>
            <person name="Suzuki Y."/>
            <person name="Nishikawa T."/>
            <person name="Otsuki T."/>
            <person name="Sugiyama T."/>
            <person name="Irie R."/>
            <person name="Wakamatsu A."/>
            <person name="Hayashi K."/>
            <person name="Sato H."/>
            <person name="Nagai K."/>
            <person name="Kimura K."/>
            <person name="Makita H."/>
            <person name="Sekine M."/>
            <person name="Obayashi M."/>
            <person name="Nishi T."/>
            <person name="Shibahara T."/>
            <person name="Tanaka T."/>
            <person name="Ishii S."/>
            <person name="Yamamoto J."/>
            <person name="Saito K."/>
            <person name="Kawai Y."/>
            <person name="Isono Y."/>
            <person name="Nakamura Y."/>
            <person name="Nagahari K."/>
            <person name="Murakami K."/>
            <person name="Yasuda T."/>
            <person name="Iwayanagi T."/>
            <person name="Wagatsuma M."/>
            <person name="Shiratori A."/>
            <person name="Sudo H."/>
            <person name="Hosoiri T."/>
            <person name="Kaku Y."/>
            <person name="Kodaira H."/>
            <person name="Kondo H."/>
            <person name="Sugawara M."/>
            <person name="Takahashi M."/>
            <person name="Kanda K."/>
            <person name="Yokoi T."/>
            <person name="Furuya T."/>
            <person name="Kikkawa E."/>
            <person name="Omura Y."/>
            <person name="Abe K."/>
            <person name="Kamihara K."/>
            <person name="Katsuta N."/>
            <person name="Sato K."/>
            <person name="Tanikawa M."/>
            <person name="Yamazaki M."/>
            <person name="Ninomiya K."/>
            <person name="Ishibashi T."/>
            <person name="Yamashita H."/>
            <person name="Murakawa K."/>
            <person name="Fujimori K."/>
            <person name="Tanai H."/>
            <person name="Kimata M."/>
            <person name="Watanabe M."/>
            <person name="Hiraoka S."/>
            <person name="Chiba Y."/>
            <person name="Ishida S."/>
            <person name="Ono Y."/>
            <person name="Takiguchi S."/>
            <person name="Watanabe S."/>
            <person name="Yosida M."/>
            <person name="Hotuta T."/>
            <person name="Kusano J."/>
            <person name="Kanehori K."/>
            <person name="Takahashi-Fujii A."/>
            <person name="Hara H."/>
            <person name="Tanase T.-O."/>
            <person name="Nomura Y."/>
            <person name="Togiya S."/>
            <person name="Komai F."/>
            <person name="Hara R."/>
            <person name="Takeuchi K."/>
            <person name="Arita M."/>
            <person name="Imose N."/>
            <person name="Musashino K."/>
            <person name="Yuuki H."/>
            <person name="Oshima A."/>
            <person name="Sasaki N."/>
            <person name="Aotsuka S."/>
            <person name="Yoshikawa Y."/>
            <person name="Matsunawa H."/>
            <person name="Ichihara T."/>
            <person name="Shiohata N."/>
            <person name="Sano S."/>
            <person name="Moriya S."/>
            <person name="Momiyama H."/>
            <person name="Satoh N."/>
            <person name="Takami S."/>
            <person name="Terashima Y."/>
            <person name="Suzuki O."/>
            <person name="Nakagawa S."/>
            <person name="Senoh A."/>
            <person name="Mizoguchi H."/>
            <person name="Goto Y."/>
            <person name="Shimizu F."/>
            <person name="Wakebe H."/>
            <person name="Hishigaki H."/>
            <person name="Watanabe T."/>
            <person name="Sugiyama A."/>
            <person name="Takemoto M."/>
            <person name="Kawakami B."/>
            <person name="Yamazaki M."/>
            <person name="Watanabe K."/>
            <person name="Kumagai A."/>
            <person name="Itakura S."/>
            <person name="Fukuzumi Y."/>
            <person name="Fujimori Y."/>
            <person name="Komiyama M."/>
            <person name="Tashiro H."/>
            <person name="Tanigami A."/>
            <person name="Fujiwara T."/>
            <person name="Ono T."/>
            <person name="Yamada K."/>
            <person name="Fujii Y."/>
            <person name="Ozaki K."/>
            <person name="Hirao M."/>
            <person name="Ohmori Y."/>
            <person name="Kawabata A."/>
            <person name="Hikiji T."/>
            <person name="Kobatake N."/>
            <person name="Inagaki H."/>
            <person name="Ikema Y."/>
            <person name="Okamoto S."/>
            <person name="Okitani R."/>
            <person name="Kawakami T."/>
            <person name="Noguchi S."/>
            <person name="Itoh T."/>
            <person name="Shigeta K."/>
            <person name="Senba T."/>
            <person name="Matsumura K."/>
            <person name="Nakajima Y."/>
            <person name="Mizuno T."/>
            <person name="Morinaga M."/>
            <person name="Sasaki M."/>
            <person name="Togashi T."/>
            <person name="Oyama M."/>
            <person name="Hata H."/>
            <person name="Watanabe M."/>
            <person name="Komatsu T."/>
            <person name="Mizushima-Sugano J."/>
            <person name="Satoh T."/>
            <person name="Shirai Y."/>
            <person name="Takahashi Y."/>
            <person name="Nakagawa K."/>
            <person name="Okumura K."/>
            <person name="Nagase T."/>
            <person name="Nomura N."/>
            <person name="Kikuchi H."/>
            <person name="Masuho Y."/>
            <person name="Yamashita R."/>
            <person name="Nakai K."/>
            <person name="Yada T."/>
            <person name="Nakamura Y."/>
            <person name="Ohara O."/>
            <person name="Isogai T."/>
            <person name="Sugano S."/>
        </authorList>
    </citation>
    <scope>NUCLEOTIDE SEQUENCE [LARGE SCALE MRNA]</scope>
    <source>
        <tissue>Spleen</tissue>
    </source>
</reference>
<reference key="2">
    <citation type="journal article" date="2006" name="Nature">
        <title>The DNA sequence and biological annotation of human chromosome 1.</title>
        <authorList>
            <person name="Gregory S.G."/>
            <person name="Barlow K.F."/>
            <person name="McLay K.E."/>
            <person name="Kaul R."/>
            <person name="Swarbreck D."/>
            <person name="Dunham A."/>
            <person name="Scott C.E."/>
            <person name="Howe K.L."/>
            <person name="Woodfine K."/>
            <person name="Spencer C.C.A."/>
            <person name="Jones M.C."/>
            <person name="Gillson C."/>
            <person name="Searle S."/>
            <person name="Zhou Y."/>
            <person name="Kokocinski F."/>
            <person name="McDonald L."/>
            <person name="Evans R."/>
            <person name="Phillips K."/>
            <person name="Atkinson A."/>
            <person name="Cooper R."/>
            <person name="Jones C."/>
            <person name="Hall R.E."/>
            <person name="Andrews T.D."/>
            <person name="Lloyd C."/>
            <person name="Ainscough R."/>
            <person name="Almeida J.P."/>
            <person name="Ambrose K.D."/>
            <person name="Anderson F."/>
            <person name="Andrew R.W."/>
            <person name="Ashwell R.I.S."/>
            <person name="Aubin K."/>
            <person name="Babbage A.K."/>
            <person name="Bagguley C.L."/>
            <person name="Bailey J."/>
            <person name="Beasley H."/>
            <person name="Bethel G."/>
            <person name="Bird C.P."/>
            <person name="Bray-Allen S."/>
            <person name="Brown J.Y."/>
            <person name="Brown A.J."/>
            <person name="Buckley D."/>
            <person name="Burton J."/>
            <person name="Bye J."/>
            <person name="Carder C."/>
            <person name="Chapman J.C."/>
            <person name="Clark S.Y."/>
            <person name="Clarke G."/>
            <person name="Clee C."/>
            <person name="Cobley V."/>
            <person name="Collier R.E."/>
            <person name="Corby N."/>
            <person name="Coville G.J."/>
            <person name="Davies J."/>
            <person name="Deadman R."/>
            <person name="Dunn M."/>
            <person name="Earthrowl M."/>
            <person name="Ellington A.G."/>
            <person name="Errington H."/>
            <person name="Frankish A."/>
            <person name="Frankland J."/>
            <person name="French L."/>
            <person name="Garner P."/>
            <person name="Garnett J."/>
            <person name="Gay L."/>
            <person name="Ghori M.R.J."/>
            <person name="Gibson R."/>
            <person name="Gilby L.M."/>
            <person name="Gillett W."/>
            <person name="Glithero R.J."/>
            <person name="Grafham D.V."/>
            <person name="Griffiths C."/>
            <person name="Griffiths-Jones S."/>
            <person name="Grocock R."/>
            <person name="Hammond S."/>
            <person name="Harrison E.S.I."/>
            <person name="Hart E."/>
            <person name="Haugen E."/>
            <person name="Heath P.D."/>
            <person name="Holmes S."/>
            <person name="Holt K."/>
            <person name="Howden P.J."/>
            <person name="Hunt A.R."/>
            <person name="Hunt S.E."/>
            <person name="Hunter G."/>
            <person name="Isherwood J."/>
            <person name="James R."/>
            <person name="Johnson C."/>
            <person name="Johnson D."/>
            <person name="Joy A."/>
            <person name="Kay M."/>
            <person name="Kershaw J.K."/>
            <person name="Kibukawa M."/>
            <person name="Kimberley A.M."/>
            <person name="King A."/>
            <person name="Knights A.J."/>
            <person name="Lad H."/>
            <person name="Laird G."/>
            <person name="Lawlor S."/>
            <person name="Leongamornlert D.A."/>
            <person name="Lloyd D.M."/>
            <person name="Loveland J."/>
            <person name="Lovell J."/>
            <person name="Lush M.J."/>
            <person name="Lyne R."/>
            <person name="Martin S."/>
            <person name="Mashreghi-Mohammadi M."/>
            <person name="Matthews L."/>
            <person name="Matthews N.S.W."/>
            <person name="McLaren S."/>
            <person name="Milne S."/>
            <person name="Mistry S."/>
            <person name="Moore M.J.F."/>
            <person name="Nickerson T."/>
            <person name="O'Dell C.N."/>
            <person name="Oliver K."/>
            <person name="Palmeiri A."/>
            <person name="Palmer S.A."/>
            <person name="Parker A."/>
            <person name="Patel D."/>
            <person name="Pearce A.V."/>
            <person name="Peck A.I."/>
            <person name="Pelan S."/>
            <person name="Phelps K."/>
            <person name="Phillimore B.J."/>
            <person name="Plumb R."/>
            <person name="Rajan J."/>
            <person name="Raymond C."/>
            <person name="Rouse G."/>
            <person name="Saenphimmachak C."/>
            <person name="Sehra H.K."/>
            <person name="Sheridan E."/>
            <person name="Shownkeen R."/>
            <person name="Sims S."/>
            <person name="Skuce C.D."/>
            <person name="Smith M."/>
            <person name="Steward C."/>
            <person name="Subramanian S."/>
            <person name="Sycamore N."/>
            <person name="Tracey A."/>
            <person name="Tromans A."/>
            <person name="Van Helmond Z."/>
            <person name="Wall M."/>
            <person name="Wallis J.M."/>
            <person name="White S."/>
            <person name="Whitehead S.L."/>
            <person name="Wilkinson J.E."/>
            <person name="Willey D.L."/>
            <person name="Williams H."/>
            <person name="Wilming L."/>
            <person name="Wray P.W."/>
            <person name="Wu Z."/>
            <person name="Coulson A."/>
            <person name="Vaudin M."/>
            <person name="Sulston J.E."/>
            <person name="Durbin R.M."/>
            <person name="Hubbard T."/>
            <person name="Wooster R."/>
            <person name="Dunham I."/>
            <person name="Carter N.P."/>
            <person name="McVean G."/>
            <person name="Ross M.T."/>
            <person name="Harrow J."/>
            <person name="Olson M.V."/>
            <person name="Beck S."/>
            <person name="Rogers J."/>
            <person name="Bentley D.R."/>
        </authorList>
    </citation>
    <scope>NUCLEOTIDE SEQUENCE [LARGE SCALE GENOMIC DNA]</scope>
</reference>
<reference key="3">
    <citation type="journal article" date="2004" name="Genome Res.">
        <title>The status, quality, and expansion of the NIH full-length cDNA project: the Mammalian Gene Collection (MGC).</title>
        <authorList>
            <consortium name="The MGC Project Team"/>
        </authorList>
    </citation>
    <scope>NUCLEOTIDE SEQUENCE [LARGE SCALE MRNA]</scope>
    <source>
        <tissue>Brain</tissue>
        <tissue>Muscle</tissue>
        <tissue>PNS</tissue>
    </source>
</reference>